<reference key="1">
    <citation type="journal article" date="2006" name="J. Bacteriol.">
        <title>Pathogenomic sequence analysis of Bacillus cereus and Bacillus thuringiensis isolates closely related to Bacillus anthracis.</title>
        <authorList>
            <person name="Han C.S."/>
            <person name="Xie G."/>
            <person name="Challacombe J.F."/>
            <person name="Altherr M.R."/>
            <person name="Bhotika S.S."/>
            <person name="Bruce D."/>
            <person name="Campbell C.S."/>
            <person name="Campbell M.L."/>
            <person name="Chen J."/>
            <person name="Chertkov O."/>
            <person name="Cleland C."/>
            <person name="Dimitrijevic M."/>
            <person name="Doggett N.A."/>
            <person name="Fawcett J.J."/>
            <person name="Glavina T."/>
            <person name="Goodwin L.A."/>
            <person name="Hill K.K."/>
            <person name="Hitchcock P."/>
            <person name="Jackson P.J."/>
            <person name="Keim P."/>
            <person name="Kewalramani A.R."/>
            <person name="Longmire J."/>
            <person name="Lucas S."/>
            <person name="Malfatti S."/>
            <person name="McMurry K."/>
            <person name="Meincke L.J."/>
            <person name="Misra M."/>
            <person name="Moseman B.L."/>
            <person name="Mundt M."/>
            <person name="Munk A.C."/>
            <person name="Okinaka R.T."/>
            <person name="Parson-Quintana B."/>
            <person name="Reilly L.P."/>
            <person name="Richardson P."/>
            <person name="Robinson D.L."/>
            <person name="Rubin E."/>
            <person name="Saunders E."/>
            <person name="Tapia R."/>
            <person name="Tesmer J.G."/>
            <person name="Thayer N."/>
            <person name="Thompson L.S."/>
            <person name="Tice H."/>
            <person name="Ticknor L.O."/>
            <person name="Wills P.L."/>
            <person name="Brettin T.S."/>
            <person name="Gilna P."/>
        </authorList>
    </citation>
    <scope>NUCLEOTIDE SEQUENCE [LARGE SCALE GENOMIC DNA]</scope>
    <source>
        <strain>97-27</strain>
    </source>
</reference>
<protein>
    <recommendedName>
        <fullName evidence="1">Biotin synthase</fullName>
        <ecNumber evidence="1">2.8.1.6</ecNumber>
    </recommendedName>
</protein>
<evidence type="ECO:0000255" key="1">
    <source>
        <dbReference type="HAMAP-Rule" id="MF_01694"/>
    </source>
</evidence>
<evidence type="ECO:0000255" key="2">
    <source>
        <dbReference type="PROSITE-ProRule" id="PRU01266"/>
    </source>
</evidence>
<name>BIOB_BACHK</name>
<organism>
    <name type="scientific">Bacillus thuringiensis subsp. konkukian (strain 97-27)</name>
    <dbReference type="NCBI Taxonomy" id="281309"/>
    <lineage>
        <taxon>Bacteria</taxon>
        <taxon>Bacillati</taxon>
        <taxon>Bacillota</taxon>
        <taxon>Bacilli</taxon>
        <taxon>Bacillales</taxon>
        <taxon>Bacillaceae</taxon>
        <taxon>Bacillus</taxon>
        <taxon>Bacillus cereus group</taxon>
    </lineage>
</organism>
<feature type="chain" id="PRO_0000381230" description="Biotin synthase">
    <location>
        <begin position="1"/>
        <end position="332"/>
    </location>
</feature>
<feature type="domain" description="Radical SAM core" evidence="2">
    <location>
        <begin position="53"/>
        <end position="282"/>
    </location>
</feature>
<feature type="binding site" evidence="1">
    <location>
        <position position="71"/>
    </location>
    <ligand>
        <name>[4Fe-4S] cluster</name>
        <dbReference type="ChEBI" id="CHEBI:49883"/>
        <note>4Fe-4S-S-AdoMet</note>
    </ligand>
</feature>
<feature type="binding site" evidence="1">
    <location>
        <position position="75"/>
    </location>
    <ligand>
        <name>[4Fe-4S] cluster</name>
        <dbReference type="ChEBI" id="CHEBI:49883"/>
        <note>4Fe-4S-S-AdoMet</note>
    </ligand>
</feature>
<feature type="binding site" evidence="1">
    <location>
        <position position="78"/>
    </location>
    <ligand>
        <name>[4Fe-4S] cluster</name>
        <dbReference type="ChEBI" id="CHEBI:49883"/>
        <note>4Fe-4S-S-AdoMet</note>
    </ligand>
</feature>
<feature type="binding site" evidence="1">
    <location>
        <position position="115"/>
    </location>
    <ligand>
        <name>[2Fe-2S] cluster</name>
        <dbReference type="ChEBI" id="CHEBI:190135"/>
    </ligand>
</feature>
<feature type="binding site" evidence="1">
    <location>
        <position position="147"/>
    </location>
    <ligand>
        <name>[2Fe-2S] cluster</name>
        <dbReference type="ChEBI" id="CHEBI:190135"/>
    </ligand>
</feature>
<feature type="binding site" evidence="1">
    <location>
        <position position="207"/>
    </location>
    <ligand>
        <name>[2Fe-2S] cluster</name>
        <dbReference type="ChEBI" id="CHEBI:190135"/>
    </ligand>
</feature>
<feature type="binding site" evidence="1">
    <location>
        <position position="277"/>
    </location>
    <ligand>
        <name>[2Fe-2S] cluster</name>
        <dbReference type="ChEBI" id="CHEBI:190135"/>
    </ligand>
</feature>
<dbReference type="EC" id="2.8.1.6" evidence="1"/>
<dbReference type="EMBL" id="AE017355">
    <property type="protein sequence ID" value="AAT61051.1"/>
    <property type="molecule type" value="Genomic_DNA"/>
</dbReference>
<dbReference type="RefSeq" id="WP_000815862.1">
    <property type="nucleotide sequence ID" value="NC_005957.1"/>
</dbReference>
<dbReference type="RefSeq" id="YP_038175.1">
    <property type="nucleotide sequence ID" value="NC_005957.1"/>
</dbReference>
<dbReference type="SMR" id="Q6HE51"/>
<dbReference type="GeneID" id="45024003"/>
<dbReference type="KEGG" id="btk:BT9727_3856"/>
<dbReference type="PATRIC" id="fig|281309.8.peg.4111"/>
<dbReference type="HOGENOM" id="CLU_033172_2_1_9"/>
<dbReference type="UniPathway" id="UPA00078">
    <property type="reaction ID" value="UER00162"/>
</dbReference>
<dbReference type="Proteomes" id="UP000001301">
    <property type="component" value="Chromosome"/>
</dbReference>
<dbReference type="GO" id="GO:0051537">
    <property type="term" value="F:2 iron, 2 sulfur cluster binding"/>
    <property type="evidence" value="ECO:0007669"/>
    <property type="project" value="UniProtKB-KW"/>
</dbReference>
<dbReference type="GO" id="GO:0051539">
    <property type="term" value="F:4 iron, 4 sulfur cluster binding"/>
    <property type="evidence" value="ECO:0007669"/>
    <property type="project" value="UniProtKB-KW"/>
</dbReference>
<dbReference type="GO" id="GO:0004076">
    <property type="term" value="F:biotin synthase activity"/>
    <property type="evidence" value="ECO:0007669"/>
    <property type="project" value="UniProtKB-UniRule"/>
</dbReference>
<dbReference type="GO" id="GO:0005506">
    <property type="term" value="F:iron ion binding"/>
    <property type="evidence" value="ECO:0007669"/>
    <property type="project" value="UniProtKB-UniRule"/>
</dbReference>
<dbReference type="GO" id="GO:0009102">
    <property type="term" value="P:biotin biosynthetic process"/>
    <property type="evidence" value="ECO:0007669"/>
    <property type="project" value="UniProtKB-UniRule"/>
</dbReference>
<dbReference type="CDD" id="cd01335">
    <property type="entry name" value="Radical_SAM"/>
    <property type="match status" value="1"/>
</dbReference>
<dbReference type="FunFam" id="3.20.20.70:FF:000026">
    <property type="entry name" value="Biotin synthase"/>
    <property type="match status" value="1"/>
</dbReference>
<dbReference type="Gene3D" id="3.20.20.70">
    <property type="entry name" value="Aldolase class I"/>
    <property type="match status" value="1"/>
</dbReference>
<dbReference type="HAMAP" id="MF_01694">
    <property type="entry name" value="BioB"/>
    <property type="match status" value="1"/>
</dbReference>
<dbReference type="InterPro" id="IPR013785">
    <property type="entry name" value="Aldolase_TIM"/>
</dbReference>
<dbReference type="InterPro" id="IPR010722">
    <property type="entry name" value="BATS_dom"/>
</dbReference>
<dbReference type="InterPro" id="IPR002684">
    <property type="entry name" value="Biotin_synth/BioAB"/>
</dbReference>
<dbReference type="InterPro" id="IPR024177">
    <property type="entry name" value="Biotin_synthase"/>
</dbReference>
<dbReference type="InterPro" id="IPR006638">
    <property type="entry name" value="Elp3/MiaA/NifB-like_rSAM"/>
</dbReference>
<dbReference type="InterPro" id="IPR007197">
    <property type="entry name" value="rSAM"/>
</dbReference>
<dbReference type="NCBIfam" id="TIGR00433">
    <property type="entry name" value="bioB"/>
    <property type="match status" value="1"/>
</dbReference>
<dbReference type="PANTHER" id="PTHR22976">
    <property type="entry name" value="BIOTIN SYNTHASE"/>
    <property type="match status" value="1"/>
</dbReference>
<dbReference type="PANTHER" id="PTHR22976:SF2">
    <property type="entry name" value="BIOTIN SYNTHASE, MITOCHONDRIAL"/>
    <property type="match status" value="1"/>
</dbReference>
<dbReference type="Pfam" id="PF06968">
    <property type="entry name" value="BATS"/>
    <property type="match status" value="1"/>
</dbReference>
<dbReference type="Pfam" id="PF04055">
    <property type="entry name" value="Radical_SAM"/>
    <property type="match status" value="1"/>
</dbReference>
<dbReference type="PIRSF" id="PIRSF001619">
    <property type="entry name" value="Biotin_synth"/>
    <property type="match status" value="1"/>
</dbReference>
<dbReference type="SFLD" id="SFLDG01060">
    <property type="entry name" value="BATS_domain_containing"/>
    <property type="match status" value="1"/>
</dbReference>
<dbReference type="SFLD" id="SFLDG01278">
    <property type="entry name" value="biotin_synthase_like"/>
    <property type="match status" value="1"/>
</dbReference>
<dbReference type="SMART" id="SM00876">
    <property type="entry name" value="BATS"/>
    <property type="match status" value="1"/>
</dbReference>
<dbReference type="SMART" id="SM00729">
    <property type="entry name" value="Elp3"/>
    <property type="match status" value="1"/>
</dbReference>
<dbReference type="SUPFAM" id="SSF102114">
    <property type="entry name" value="Radical SAM enzymes"/>
    <property type="match status" value="1"/>
</dbReference>
<dbReference type="PROSITE" id="PS51918">
    <property type="entry name" value="RADICAL_SAM"/>
    <property type="match status" value="1"/>
</dbReference>
<gene>
    <name evidence="1" type="primary">bioB</name>
    <name type="ordered locus">BT9727_3856</name>
</gene>
<accession>Q6HE51</accession>
<keyword id="KW-0001">2Fe-2S</keyword>
<keyword id="KW-0004">4Fe-4S</keyword>
<keyword id="KW-0093">Biotin biosynthesis</keyword>
<keyword id="KW-0408">Iron</keyword>
<keyword id="KW-0411">Iron-sulfur</keyword>
<keyword id="KW-0479">Metal-binding</keyword>
<keyword id="KW-0949">S-adenosyl-L-methionine</keyword>
<keyword id="KW-0808">Transferase</keyword>
<comment type="function">
    <text evidence="1">Catalyzes the conversion of dethiobiotin (DTB) to biotin by the insertion of a sulfur atom into dethiobiotin via a radical-based mechanism.</text>
</comment>
<comment type="catalytic activity">
    <reaction evidence="1">
        <text>(4R,5S)-dethiobiotin + (sulfur carrier)-SH + 2 reduced [2Fe-2S]-[ferredoxin] + 2 S-adenosyl-L-methionine = (sulfur carrier)-H + biotin + 2 5'-deoxyadenosine + 2 L-methionine + 2 oxidized [2Fe-2S]-[ferredoxin]</text>
        <dbReference type="Rhea" id="RHEA:22060"/>
        <dbReference type="Rhea" id="RHEA-COMP:10000"/>
        <dbReference type="Rhea" id="RHEA-COMP:10001"/>
        <dbReference type="Rhea" id="RHEA-COMP:14737"/>
        <dbReference type="Rhea" id="RHEA-COMP:14739"/>
        <dbReference type="ChEBI" id="CHEBI:17319"/>
        <dbReference type="ChEBI" id="CHEBI:29917"/>
        <dbReference type="ChEBI" id="CHEBI:33737"/>
        <dbReference type="ChEBI" id="CHEBI:33738"/>
        <dbReference type="ChEBI" id="CHEBI:57586"/>
        <dbReference type="ChEBI" id="CHEBI:57844"/>
        <dbReference type="ChEBI" id="CHEBI:59789"/>
        <dbReference type="ChEBI" id="CHEBI:64428"/>
        <dbReference type="ChEBI" id="CHEBI:149473"/>
        <dbReference type="EC" id="2.8.1.6"/>
    </reaction>
</comment>
<comment type="cofactor">
    <cofactor evidence="1">
        <name>[4Fe-4S] cluster</name>
        <dbReference type="ChEBI" id="CHEBI:49883"/>
    </cofactor>
    <text evidence="1">Binds 1 [4Fe-4S] cluster. The cluster is coordinated with 3 cysteines and an exchangeable S-adenosyl-L-methionine.</text>
</comment>
<comment type="cofactor">
    <cofactor evidence="1">
        <name>[2Fe-2S] cluster</name>
        <dbReference type="ChEBI" id="CHEBI:190135"/>
    </cofactor>
    <text evidence="1">Binds 1 [2Fe-2S] cluster. The cluster is coordinated with 3 cysteines and 1 arginine.</text>
</comment>
<comment type="pathway">
    <text evidence="1">Cofactor biosynthesis; biotin biosynthesis; biotin from 7,8-diaminononanoate: step 2/2.</text>
</comment>
<comment type="subunit">
    <text evidence="1">Homodimer.</text>
</comment>
<comment type="similarity">
    <text evidence="1">Belongs to the radical SAM superfamily. Biotin synthase family.</text>
</comment>
<proteinExistence type="inferred from homology"/>
<sequence length="332" mass="36996">MKQVQTKRDWKKLAYDVVEEKMITKEDAIAILEADDTEVLEIMNAAYIIRHHYFGKKVKLNMIINTKSGLCPEDCGYCSQSIISEAPIDKYAWLTQEKIVEGAHEAIRRKAGTYCIVASGRRPTDKEVNHVIGAVKEIRETTDLKICCCLGFLNEDQAGRLAEAGVHRYNHNLNTHANNYESICSTHTYDDRVDTVQKAKQAGISPCSGAIFGMGETIEERAEIAFELQRIDADSIPCNFLVAVKGTPLEGQKELTPVECLKVLAMMRFVNPTKEIRISGGREINLRSVQPIGLFAANSIFVGDYLTTAGQEPTADWGMIEDLGFEIEECAL</sequence>